<dbReference type="EC" id="2.4.1.16" evidence="7"/>
<dbReference type="EMBL" id="DS572715">
    <property type="protein sequence ID" value="EGY18257.1"/>
    <property type="molecule type" value="Genomic_DNA"/>
</dbReference>
<dbReference type="RefSeq" id="XP_009651195.1">
    <property type="nucleotide sequence ID" value="XM_009652900.1"/>
</dbReference>
<dbReference type="SMR" id="G2XEK6"/>
<dbReference type="STRING" id="498257.G2XEK6"/>
<dbReference type="EnsemblFungi" id="EGY18257">
    <property type="protein sequence ID" value="EGY18257"/>
    <property type="gene ID" value="VDAG_08591"/>
</dbReference>
<dbReference type="GeneID" id="20710054"/>
<dbReference type="KEGG" id="vda:VDAG_08591"/>
<dbReference type="eggNOG" id="KOG2571">
    <property type="taxonomic scope" value="Eukaryota"/>
</dbReference>
<dbReference type="HOGENOM" id="CLU_004760_0_1_1"/>
<dbReference type="InParanoid" id="G2XEK6"/>
<dbReference type="OMA" id="WHLTYIK"/>
<dbReference type="OrthoDB" id="12109at1028384"/>
<dbReference type="PHI-base" id="PHI:123303"/>
<dbReference type="Proteomes" id="UP000001611">
    <property type="component" value="Chromosome 2"/>
</dbReference>
<dbReference type="GO" id="GO:0030428">
    <property type="term" value="C:cell septum"/>
    <property type="evidence" value="ECO:0007669"/>
    <property type="project" value="TreeGrafter"/>
</dbReference>
<dbReference type="GO" id="GO:0005886">
    <property type="term" value="C:plasma membrane"/>
    <property type="evidence" value="ECO:0007669"/>
    <property type="project" value="UniProtKB-SubCell"/>
</dbReference>
<dbReference type="GO" id="GO:0004100">
    <property type="term" value="F:chitin synthase activity"/>
    <property type="evidence" value="ECO:0007669"/>
    <property type="project" value="UniProtKB-EC"/>
</dbReference>
<dbReference type="GO" id="GO:0071555">
    <property type="term" value="P:cell wall organization"/>
    <property type="evidence" value="ECO:0007669"/>
    <property type="project" value="UniProtKB-KW"/>
</dbReference>
<dbReference type="GO" id="GO:0006031">
    <property type="term" value="P:chitin biosynthetic process"/>
    <property type="evidence" value="ECO:0007669"/>
    <property type="project" value="InterPro"/>
</dbReference>
<dbReference type="CDD" id="cd04190">
    <property type="entry name" value="Chitin_synth_C"/>
    <property type="match status" value="1"/>
</dbReference>
<dbReference type="InterPro" id="IPR004835">
    <property type="entry name" value="Chitin_synth"/>
</dbReference>
<dbReference type="InterPro" id="IPR004834">
    <property type="entry name" value="Chitin_synth_fun"/>
</dbReference>
<dbReference type="InterPro" id="IPR013616">
    <property type="entry name" value="Chitin_synth_N"/>
</dbReference>
<dbReference type="InterPro" id="IPR029044">
    <property type="entry name" value="Nucleotide-diphossugar_trans"/>
</dbReference>
<dbReference type="PANTHER" id="PTHR22914">
    <property type="entry name" value="CHITIN SYNTHASE"/>
    <property type="match status" value="1"/>
</dbReference>
<dbReference type="PANTHER" id="PTHR22914:SF11">
    <property type="entry name" value="CHITIN SYNTHASE B"/>
    <property type="match status" value="1"/>
</dbReference>
<dbReference type="Pfam" id="PF01644">
    <property type="entry name" value="Chitin_synth_1"/>
    <property type="match status" value="1"/>
</dbReference>
<dbReference type="Pfam" id="PF08407">
    <property type="entry name" value="Chitin_synth_1N"/>
    <property type="match status" value="1"/>
</dbReference>
<dbReference type="SUPFAM" id="SSF53448">
    <property type="entry name" value="Nucleotide-diphospho-sugar transferases"/>
    <property type="match status" value="1"/>
</dbReference>
<proteinExistence type="inferred from homology"/>
<comment type="function">
    <text evidence="4 7">Polymerizes chitin, a structural polymer of the cell wall and septum, by transferring the sugar moiety of UDP-GlcNAc to the non-reducing end of the growing chitin polymer (Probable). Plays a role in cell wall integrity and is involved in tolerance to hyperosmotic conditions (PubMed:35887437). Required to successfully penetrate the host plants and thus plays a key role in pathogenicity (PubMed:35887437).</text>
</comment>
<comment type="catalytic activity">
    <reaction evidence="7">
        <text>[(1-&gt;4)-N-acetyl-beta-D-glucosaminyl](n) + UDP-N-acetyl-alpha-D-glucosamine = [(1-&gt;4)-N-acetyl-beta-D-glucosaminyl](n+1) + UDP + H(+)</text>
        <dbReference type="Rhea" id="RHEA:16637"/>
        <dbReference type="Rhea" id="RHEA-COMP:9593"/>
        <dbReference type="Rhea" id="RHEA-COMP:9595"/>
        <dbReference type="ChEBI" id="CHEBI:15378"/>
        <dbReference type="ChEBI" id="CHEBI:17029"/>
        <dbReference type="ChEBI" id="CHEBI:57705"/>
        <dbReference type="ChEBI" id="CHEBI:58223"/>
        <dbReference type="EC" id="2.4.1.16"/>
    </reaction>
    <physiologicalReaction direction="left-to-right" evidence="7">
        <dbReference type="Rhea" id="RHEA:16638"/>
    </physiologicalReaction>
</comment>
<comment type="subcellular location">
    <subcellularLocation>
        <location evidence="6">Cell membrane</location>
        <topology evidence="1">Multi-pass membrane protein</topology>
    </subcellularLocation>
</comment>
<comment type="disruption phenotype">
    <text evidence="4">Leads to a winkled surface morphology (PubMed:35887437). Significantly impairs conidiation (PubMed:35887437). Impairs penetration in host plants and exhibits a significant reduced pathogenicity in Arabidopsis and cotton plants (PubMed:35887437).</text>
</comment>
<comment type="similarity">
    <text evidence="6">Belongs to the chitin synthase family. Class III subfamily.</text>
</comment>
<evidence type="ECO:0000255" key="1"/>
<evidence type="ECO:0000255" key="2">
    <source>
        <dbReference type="PROSITE-ProRule" id="PRU00498"/>
    </source>
</evidence>
<evidence type="ECO:0000256" key="3">
    <source>
        <dbReference type="SAM" id="MobiDB-lite"/>
    </source>
</evidence>
<evidence type="ECO:0000269" key="4">
    <source>
    </source>
</evidence>
<evidence type="ECO:0000303" key="5">
    <source>
    </source>
</evidence>
<evidence type="ECO:0000305" key="6"/>
<evidence type="ECO:0000305" key="7">
    <source>
    </source>
</evidence>
<name>CHS1_VERDV</name>
<feature type="chain" id="PRO_0000460800" description="Chitin synthase 1">
    <location>
        <begin position="1"/>
        <end position="913"/>
    </location>
</feature>
<feature type="transmembrane region" description="Helical" evidence="1">
    <location>
        <begin position="566"/>
        <end position="586"/>
    </location>
</feature>
<feature type="transmembrane region" description="Helical" evidence="1">
    <location>
        <begin position="625"/>
        <end position="645"/>
    </location>
</feature>
<feature type="transmembrane region" description="Helical" evidence="1">
    <location>
        <begin position="658"/>
        <end position="678"/>
    </location>
</feature>
<feature type="transmembrane region" description="Helical" evidence="1">
    <location>
        <begin position="712"/>
        <end position="732"/>
    </location>
</feature>
<feature type="transmembrane region" description="Helical" evidence="1">
    <location>
        <begin position="740"/>
        <end position="760"/>
    </location>
</feature>
<feature type="transmembrane region" description="Helical" evidence="1">
    <location>
        <begin position="840"/>
        <end position="860"/>
    </location>
</feature>
<feature type="transmembrane region" description="Helical" evidence="1">
    <location>
        <begin position="881"/>
        <end position="901"/>
    </location>
</feature>
<feature type="region of interest" description="Disordered" evidence="3">
    <location>
        <begin position="1"/>
        <end position="135"/>
    </location>
</feature>
<feature type="compositionally biased region" description="Basic and acidic residues" evidence="3">
    <location>
        <begin position="41"/>
        <end position="56"/>
    </location>
</feature>
<feature type="glycosylation site" description="N-linked (GlcNAc...) asparagine" evidence="2">
    <location>
        <position position="25"/>
    </location>
</feature>
<feature type="glycosylation site" description="N-linked (GlcNAc...) asparagine" evidence="2">
    <location>
        <position position="539"/>
    </location>
</feature>
<protein>
    <recommendedName>
        <fullName evidence="5">Chitin synthase 1</fullName>
        <ecNumber evidence="7">2.4.1.16</ecNumber>
    </recommendedName>
    <alternativeName>
        <fullName evidence="6">Chitin-UDP acetyl-glucosaminyl transferase 1</fullName>
    </alternativeName>
    <alternativeName>
        <fullName evidence="6">Class-III chitin synthase 1</fullName>
    </alternativeName>
</protein>
<gene>
    <name evidence="5" type="primary">CHS1</name>
    <name type="ORF">VDAG_08591</name>
</gene>
<organism>
    <name type="scientific">Verticillium dahliae (strain VdLs.17 / ATCC MYA-4575 / FGSC 10137)</name>
    <name type="common">Verticillium wilt</name>
    <dbReference type="NCBI Taxonomy" id="498257"/>
    <lineage>
        <taxon>Eukaryota</taxon>
        <taxon>Fungi</taxon>
        <taxon>Dikarya</taxon>
        <taxon>Ascomycota</taxon>
        <taxon>Pezizomycotina</taxon>
        <taxon>Sordariomycetes</taxon>
        <taxon>Hypocreomycetidae</taxon>
        <taxon>Glomerellales</taxon>
        <taxon>Plectosphaerellaceae</taxon>
        <taxon>Verticillium</taxon>
    </lineage>
</organism>
<keyword id="KW-1003">Cell membrane</keyword>
<keyword id="KW-0961">Cell wall biogenesis/degradation</keyword>
<keyword id="KW-0325">Glycoprotein</keyword>
<keyword id="KW-0328">Glycosyltransferase</keyword>
<keyword id="KW-0472">Membrane</keyword>
<keyword id="KW-1185">Reference proteome</keyword>
<keyword id="KW-0808">Transferase</keyword>
<keyword id="KW-0812">Transmembrane</keyword>
<keyword id="KW-1133">Transmembrane helix</keyword>
<keyword id="KW-0843">Virulence</keyword>
<sequence length="913" mass="101805">MAYRGGGPNDYEGHDLQDLPPGSGNGSRDEGVDDVGQSLLRDPHARGTSPYEHHLGAQEPPARPVSAYSLTESYAPDAGSRTPAPPPDNFGVGTGYSQELDPQNGGFGYGRPASTVDTDESWVRRQQPGAQTGGLKRYATRKIKLQQGSVLSIDYPVPSAIKNAVQPKYRDVEGGSEEFMKMRYTAATCDPNDFTLKNGYDLRPRMYNRHTEVLIAITYYNEDKNLLSRTLHGVMQNIRDIVNLKKSTFWNKGGPAWQKIVVCLVFDGIEKADKNVLDVLATVGIYQDGVVKKDVDGKETIAHIFEYTSQLSVTPNQQLIRPVDDGPSTLPPVQFIFCLKGKNSKKINSHRWLFNAFGRILNPEICILLDAGTKPSPRSLLALWEGFYNDKDLGGACGEIHAMLGKGGKKLLNPLVAVQNFEYKISNILDKPLESSFGYVSVLPGAFSAYRFRAIMGRPLEQYFHGDHTLSKILGKKGIDGMNIFKKNMFLAEDRILCFELVAKAGQKWHLSYIKAAKGETDVPEGAAEFISQRRRWLNGSFAASLYSLMHFGRMYKSGHNLIRMFFFHIQLIYNVLNVIFTWFSLASYYLTTSIIMNLVGTPTEASADSSAHTAWPFGDSATPIINSILQYLYLAFLVIQFVLALGNRPKGSKFTYIASFIVFGFIQTYILVLSGYLVARAFNTPIGDQISLESGKAFVDSFFGGDNAAGVILVALVTIYGLNFIASFMYLDPWHMFHSFPYYLVLMSTYINILMVYAFNNWHDVSWGTKGSDKAEALPSAHISKGEKGEEAVVEEIDKPQEDIDSQFEQTVRRALEPFKEVEEVEKRDVEDSYKSFRTGLVVSWLFSNAALIVFITTDDFNAFGFSDDPNGRSAAFFSFLLYSTAVLALVRFTGFLWFLGKTGIMCCIARR</sequence>
<reference key="1">
    <citation type="journal article" date="2011" name="PLoS Pathog.">
        <title>Comparative genomics yields insights into niche adaptation of plant vascular wilt pathogens.</title>
        <authorList>
            <person name="Klosterman S.J."/>
            <person name="Subbarao K.V."/>
            <person name="Kang S."/>
            <person name="Veronese P."/>
            <person name="Gold S.E."/>
            <person name="Thomma B.P.H.J."/>
            <person name="Chen Z."/>
            <person name="Henrissat B."/>
            <person name="Lee Y.-H."/>
            <person name="Park J."/>
            <person name="Garcia-Pedrajas M.D."/>
            <person name="Barbara D.J."/>
            <person name="Anchieta A."/>
            <person name="de Jonge R."/>
            <person name="Santhanam P."/>
            <person name="Maruthachalam K."/>
            <person name="Atallah Z."/>
            <person name="Amyotte S.G."/>
            <person name="Paz Z."/>
            <person name="Inderbitzin P."/>
            <person name="Hayes R.J."/>
            <person name="Heiman D.I."/>
            <person name="Young S."/>
            <person name="Zeng Q."/>
            <person name="Engels R."/>
            <person name="Galagan J."/>
            <person name="Cuomo C.A."/>
            <person name="Dobinson K.F."/>
            <person name="Ma L.-J."/>
        </authorList>
    </citation>
    <scope>NUCLEOTIDE SEQUENCE [LARGE SCALE GENOMIC DNA]</scope>
    <source>
        <strain>VdLs.17 / ATCC MYA-4575 / FGSC 10137</strain>
    </source>
</reference>
<reference key="2">
    <citation type="journal article" date="2022" name="J. Fungi">
        <title>Chitin Synthase Genes Are Differentially Required for Growth, Stress Response, and Virulence in Verticillium dahliae.</title>
        <authorList>
            <person name="Qin J."/>
            <person name="Zhao P."/>
            <person name="Ye Z."/>
            <person name="Sun L."/>
            <person name="Hu X."/>
            <person name="Zhang J."/>
        </authorList>
    </citation>
    <scope>FUNCTION</scope>
    <scope>DISRUPTION PHENOTYPE</scope>
</reference>
<accession>G2XEK6</accession>